<accession>B2IMY5</accession>
<proteinExistence type="inferred from homology"/>
<sequence>MKTKIIVIVGPTAVGKTALAIEVAKRFNGEVVSGDSQQVYRGLDIGTAKASPEEQAAVPHHLIDVREITESYSAFDFVSEAKMTIEGIHNRGKLAIIAGGTGLYIQSLLEGYHLGGETPHEEILAYRASLEPYSDEELAHLVDQAGLEIPQFNRRRAMRALEIAHFGQDLENQETLYEPLIICLDDERSQLYERINHRVDLMFEAGLLDEAKWLFDHSPNVQAAKGIGYKELFPYFRGEQTLEEASESLKQATRRFAKRQLTWFRNRMQVTFYQIGESGVQDRILSQIEEFLDD</sequence>
<organism>
    <name type="scientific">Streptococcus pneumoniae (strain CGSP14)</name>
    <dbReference type="NCBI Taxonomy" id="516950"/>
    <lineage>
        <taxon>Bacteria</taxon>
        <taxon>Bacillati</taxon>
        <taxon>Bacillota</taxon>
        <taxon>Bacilli</taxon>
        <taxon>Lactobacillales</taxon>
        <taxon>Streptococcaceae</taxon>
        <taxon>Streptococcus</taxon>
    </lineage>
</organism>
<evidence type="ECO:0000255" key="1">
    <source>
        <dbReference type="HAMAP-Rule" id="MF_00185"/>
    </source>
</evidence>
<evidence type="ECO:0000305" key="2"/>
<feature type="chain" id="PRO_0000377336" description="tRNA dimethylallyltransferase">
    <location>
        <begin position="1"/>
        <end position="294"/>
    </location>
</feature>
<feature type="region of interest" description="Interaction with substrate tRNA" evidence="1">
    <location>
        <begin position="35"/>
        <end position="38"/>
    </location>
</feature>
<feature type="binding site" evidence="1">
    <location>
        <begin position="10"/>
        <end position="17"/>
    </location>
    <ligand>
        <name>ATP</name>
        <dbReference type="ChEBI" id="CHEBI:30616"/>
    </ligand>
</feature>
<feature type="binding site" evidence="1">
    <location>
        <begin position="12"/>
        <end position="17"/>
    </location>
    <ligand>
        <name>substrate</name>
    </ligand>
</feature>
<feature type="site" description="Interaction with substrate tRNA" evidence="1">
    <location>
        <position position="101"/>
    </location>
</feature>
<feature type="site" description="Interaction with substrate tRNA" evidence="1">
    <location>
        <position position="127"/>
    </location>
</feature>
<dbReference type="EC" id="2.5.1.75" evidence="1"/>
<dbReference type="EMBL" id="CP001033">
    <property type="protein sequence ID" value="ACB89880.1"/>
    <property type="status" value="ALT_INIT"/>
    <property type="molecule type" value="Genomic_DNA"/>
</dbReference>
<dbReference type="RefSeq" id="WP_000850193.1">
    <property type="nucleotide sequence ID" value="NC_010582.1"/>
</dbReference>
<dbReference type="SMR" id="B2IMY5"/>
<dbReference type="KEGG" id="spw:SPCG_0628"/>
<dbReference type="HOGENOM" id="CLU_032616_0_1_9"/>
<dbReference type="GO" id="GO:0005524">
    <property type="term" value="F:ATP binding"/>
    <property type="evidence" value="ECO:0007669"/>
    <property type="project" value="UniProtKB-UniRule"/>
</dbReference>
<dbReference type="GO" id="GO:0052381">
    <property type="term" value="F:tRNA dimethylallyltransferase activity"/>
    <property type="evidence" value="ECO:0007669"/>
    <property type="project" value="UniProtKB-UniRule"/>
</dbReference>
<dbReference type="GO" id="GO:0006400">
    <property type="term" value="P:tRNA modification"/>
    <property type="evidence" value="ECO:0007669"/>
    <property type="project" value="TreeGrafter"/>
</dbReference>
<dbReference type="Gene3D" id="3.40.50.300">
    <property type="entry name" value="P-loop containing nucleotide triphosphate hydrolases"/>
    <property type="match status" value="1"/>
</dbReference>
<dbReference type="HAMAP" id="MF_00185">
    <property type="entry name" value="IPP_trans"/>
    <property type="match status" value="1"/>
</dbReference>
<dbReference type="InterPro" id="IPR039657">
    <property type="entry name" value="Dimethylallyltransferase"/>
</dbReference>
<dbReference type="InterPro" id="IPR018022">
    <property type="entry name" value="IPT"/>
</dbReference>
<dbReference type="InterPro" id="IPR027417">
    <property type="entry name" value="P-loop_NTPase"/>
</dbReference>
<dbReference type="NCBIfam" id="TIGR00174">
    <property type="entry name" value="miaA"/>
    <property type="match status" value="1"/>
</dbReference>
<dbReference type="PANTHER" id="PTHR11088">
    <property type="entry name" value="TRNA DIMETHYLALLYLTRANSFERASE"/>
    <property type="match status" value="1"/>
</dbReference>
<dbReference type="PANTHER" id="PTHR11088:SF60">
    <property type="entry name" value="TRNA DIMETHYLALLYLTRANSFERASE"/>
    <property type="match status" value="1"/>
</dbReference>
<dbReference type="Pfam" id="PF01715">
    <property type="entry name" value="IPPT"/>
    <property type="match status" value="1"/>
</dbReference>
<dbReference type="SUPFAM" id="SSF52540">
    <property type="entry name" value="P-loop containing nucleoside triphosphate hydrolases"/>
    <property type="match status" value="2"/>
</dbReference>
<gene>
    <name evidence="1" type="primary">miaA</name>
    <name type="ordered locus">SPCG_0628</name>
</gene>
<protein>
    <recommendedName>
        <fullName evidence="1">tRNA dimethylallyltransferase</fullName>
        <ecNumber evidence="1">2.5.1.75</ecNumber>
    </recommendedName>
    <alternativeName>
        <fullName evidence="1">Dimethylallyl diphosphate:tRNA dimethylallyltransferase</fullName>
        <shortName evidence="1">DMAPP:tRNA dimethylallyltransferase</shortName>
        <shortName evidence="1">DMATase</shortName>
    </alternativeName>
    <alternativeName>
        <fullName evidence="1">Isopentenyl-diphosphate:tRNA isopentenyltransferase</fullName>
        <shortName evidence="1">IPP transferase</shortName>
        <shortName evidence="1">IPPT</shortName>
        <shortName evidence="1">IPTase</shortName>
    </alternativeName>
</protein>
<keyword id="KW-0067">ATP-binding</keyword>
<keyword id="KW-0460">Magnesium</keyword>
<keyword id="KW-0547">Nucleotide-binding</keyword>
<keyword id="KW-0808">Transferase</keyword>
<keyword id="KW-0819">tRNA processing</keyword>
<reference key="1">
    <citation type="journal article" date="2009" name="BMC Genomics">
        <title>Genome evolution driven by host adaptations results in a more virulent and antimicrobial-resistant Streptococcus pneumoniae serotype 14.</title>
        <authorList>
            <person name="Ding F."/>
            <person name="Tang P."/>
            <person name="Hsu M.-H."/>
            <person name="Cui P."/>
            <person name="Hu S."/>
            <person name="Yu J."/>
            <person name="Chiu C.-H."/>
        </authorList>
    </citation>
    <scope>NUCLEOTIDE SEQUENCE [LARGE SCALE GENOMIC DNA]</scope>
    <source>
        <strain>CGSP14</strain>
    </source>
</reference>
<comment type="function">
    <text evidence="1">Catalyzes the transfer of a dimethylallyl group onto the adenine at position 37 in tRNAs that read codons beginning with uridine, leading to the formation of N6-(dimethylallyl)adenosine (i(6)A).</text>
</comment>
<comment type="catalytic activity">
    <reaction evidence="1">
        <text>adenosine(37) in tRNA + dimethylallyl diphosphate = N(6)-dimethylallyladenosine(37) in tRNA + diphosphate</text>
        <dbReference type="Rhea" id="RHEA:26482"/>
        <dbReference type="Rhea" id="RHEA-COMP:10162"/>
        <dbReference type="Rhea" id="RHEA-COMP:10375"/>
        <dbReference type="ChEBI" id="CHEBI:33019"/>
        <dbReference type="ChEBI" id="CHEBI:57623"/>
        <dbReference type="ChEBI" id="CHEBI:74411"/>
        <dbReference type="ChEBI" id="CHEBI:74415"/>
        <dbReference type="EC" id="2.5.1.75"/>
    </reaction>
</comment>
<comment type="cofactor">
    <cofactor evidence="1">
        <name>Mg(2+)</name>
        <dbReference type="ChEBI" id="CHEBI:18420"/>
    </cofactor>
</comment>
<comment type="subunit">
    <text evidence="1">Monomer.</text>
</comment>
<comment type="similarity">
    <text evidence="1">Belongs to the IPP transferase family.</text>
</comment>
<comment type="sequence caution" evidence="2">
    <conflict type="erroneous initiation">
        <sequence resource="EMBL-CDS" id="ACB89880"/>
    </conflict>
</comment>
<name>MIAA_STRPS</name>